<sequence>MSLDTVVEDIRDEAQARASEIQADADERAEKIIEEAEADAEDILEERKDEVEEQIEREREQALSSANLEAKQNRLEARRDVLDDVLNRVEDELASLSNAKREELTKPLVTAAITEFDDDETVKLYARADDADLLNSLLEEHEKAEYAGEYDCLGGVVAEGQQSRVRVNNTFDSILDAVWEETLGDVSEQLFDQ</sequence>
<accession>Q18FB4</accession>
<dbReference type="EMBL" id="AM180088">
    <property type="protein sequence ID" value="CAJ53344.1"/>
    <property type="molecule type" value="Genomic_DNA"/>
</dbReference>
<dbReference type="RefSeq" id="WP_011572449.1">
    <property type="nucleotide sequence ID" value="NC_008212.1"/>
</dbReference>
<dbReference type="SMR" id="Q18FB4"/>
<dbReference type="STRING" id="362976.HQ_3247A"/>
<dbReference type="GeneID" id="4193751"/>
<dbReference type="KEGG" id="hwa:HQ_3247A"/>
<dbReference type="eggNOG" id="arCOG00869">
    <property type="taxonomic scope" value="Archaea"/>
</dbReference>
<dbReference type="HOGENOM" id="CLU_120786_0_0_2"/>
<dbReference type="Proteomes" id="UP000001975">
    <property type="component" value="Chromosome"/>
</dbReference>
<dbReference type="GO" id="GO:0005886">
    <property type="term" value="C:plasma membrane"/>
    <property type="evidence" value="ECO:0007669"/>
    <property type="project" value="UniProtKB-SubCell"/>
</dbReference>
<dbReference type="GO" id="GO:0033178">
    <property type="term" value="C:proton-transporting two-sector ATPase complex, catalytic domain"/>
    <property type="evidence" value="ECO:0007669"/>
    <property type="project" value="InterPro"/>
</dbReference>
<dbReference type="GO" id="GO:0005524">
    <property type="term" value="F:ATP binding"/>
    <property type="evidence" value="ECO:0007669"/>
    <property type="project" value="UniProtKB-UniRule"/>
</dbReference>
<dbReference type="GO" id="GO:0046933">
    <property type="term" value="F:proton-transporting ATP synthase activity, rotational mechanism"/>
    <property type="evidence" value="ECO:0007669"/>
    <property type="project" value="UniProtKB-UniRule"/>
</dbReference>
<dbReference type="GO" id="GO:0046961">
    <property type="term" value="F:proton-transporting ATPase activity, rotational mechanism"/>
    <property type="evidence" value="ECO:0007669"/>
    <property type="project" value="InterPro"/>
</dbReference>
<dbReference type="GO" id="GO:0042777">
    <property type="term" value="P:proton motive force-driven plasma membrane ATP synthesis"/>
    <property type="evidence" value="ECO:0007669"/>
    <property type="project" value="UniProtKB-UniRule"/>
</dbReference>
<dbReference type="Gene3D" id="3.30.2320.30">
    <property type="entry name" value="ATP synthase, E subunit, C-terminal"/>
    <property type="match status" value="1"/>
</dbReference>
<dbReference type="Gene3D" id="1.20.5.620">
    <property type="entry name" value="F1F0 ATP synthase subunit B, membrane domain"/>
    <property type="match status" value="1"/>
</dbReference>
<dbReference type="HAMAP" id="MF_00311">
    <property type="entry name" value="ATP_synth_E_arch"/>
    <property type="match status" value="1"/>
</dbReference>
<dbReference type="InterPro" id="IPR038495">
    <property type="entry name" value="ATPase_E_C"/>
</dbReference>
<dbReference type="InterPro" id="IPR002842">
    <property type="entry name" value="ATPase_V1_Esu"/>
</dbReference>
<dbReference type="NCBIfam" id="NF002629">
    <property type="entry name" value="PRK02292.1"/>
    <property type="match status" value="1"/>
</dbReference>
<dbReference type="PANTHER" id="PTHR45715">
    <property type="entry name" value="ATPASE H+-TRANSPORTING V1 SUBUNIT E1A-RELATED"/>
    <property type="match status" value="1"/>
</dbReference>
<dbReference type="Pfam" id="PF01991">
    <property type="entry name" value="vATP-synt_E"/>
    <property type="match status" value="1"/>
</dbReference>
<dbReference type="SUPFAM" id="SSF160527">
    <property type="entry name" value="V-type ATPase subunit E-like"/>
    <property type="match status" value="1"/>
</dbReference>
<keyword id="KW-0066">ATP synthesis</keyword>
<keyword id="KW-1003">Cell membrane</keyword>
<keyword id="KW-0375">Hydrogen ion transport</keyword>
<keyword id="KW-0406">Ion transport</keyword>
<keyword id="KW-0472">Membrane</keyword>
<keyword id="KW-1185">Reference proteome</keyword>
<keyword id="KW-0813">Transport</keyword>
<gene>
    <name evidence="1" type="primary">atpE</name>
    <name type="ordered locus">HQ_3247A</name>
</gene>
<feature type="chain" id="PRO_1000059408" description="A-type ATP synthase subunit E">
    <location>
        <begin position="1"/>
        <end position="193"/>
    </location>
</feature>
<comment type="function">
    <text evidence="1">Component of the A-type ATP synthase that produces ATP from ADP in the presence of a proton gradient across the membrane.</text>
</comment>
<comment type="subunit">
    <text evidence="1">Has multiple subunits with at least A(3), B(3), C, D, E, F, H, I and proteolipid K(x).</text>
</comment>
<comment type="subcellular location">
    <subcellularLocation>
        <location evidence="1">Cell membrane</location>
        <topology evidence="1">Peripheral membrane protein</topology>
    </subcellularLocation>
</comment>
<comment type="similarity">
    <text evidence="1">Belongs to the V-ATPase E subunit family.</text>
</comment>
<protein>
    <recommendedName>
        <fullName evidence="1">A-type ATP synthase subunit E</fullName>
    </recommendedName>
</protein>
<name>AATE_HALWD</name>
<reference key="1">
    <citation type="journal article" date="2006" name="BMC Genomics">
        <title>The genome of the square archaeon Haloquadratum walsbyi: life at the limits of water activity.</title>
        <authorList>
            <person name="Bolhuis H."/>
            <person name="Palm P."/>
            <person name="Wende A."/>
            <person name="Falb M."/>
            <person name="Rampp M."/>
            <person name="Rodriguez-Valera F."/>
            <person name="Pfeiffer F."/>
            <person name="Oesterhelt D."/>
        </authorList>
    </citation>
    <scope>NUCLEOTIDE SEQUENCE [LARGE SCALE GENOMIC DNA]</scope>
    <source>
        <strain>DSM 16790 / HBSQ001</strain>
    </source>
</reference>
<proteinExistence type="inferred from homology"/>
<evidence type="ECO:0000255" key="1">
    <source>
        <dbReference type="HAMAP-Rule" id="MF_00311"/>
    </source>
</evidence>
<organism>
    <name type="scientific">Haloquadratum walsbyi (strain DSM 16790 / HBSQ001)</name>
    <dbReference type="NCBI Taxonomy" id="362976"/>
    <lineage>
        <taxon>Archaea</taxon>
        <taxon>Methanobacteriati</taxon>
        <taxon>Methanobacteriota</taxon>
        <taxon>Stenosarchaea group</taxon>
        <taxon>Halobacteria</taxon>
        <taxon>Halobacteriales</taxon>
        <taxon>Haloferacaceae</taxon>
        <taxon>Haloquadratum</taxon>
    </lineage>
</organism>